<comment type="function">
    <text>Involved in the presentation of foreign antigens to the immune system.</text>
</comment>
<comment type="subunit">
    <text>Heterodimer of an alpha chain and a beta chain (beta-2-microglobulin).</text>
</comment>
<comment type="subcellular location">
    <subcellularLocation>
        <location>Membrane</location>
        <topology>Single-pass type I membrane protein</topology>
    </subcellularLocation>
</comment>
<comment type="similarity">
    <text evidence="7">Belongs to the MHC class I family.</text>
</comment>
<accession>P06140</accession>
<keyword id="KW-0002">3D-structure</keyword>
<keyword id="KW-1015">Disulfide bond</keyword>
<keyword id="KW-0325">Glycoprotein</keyword>
<keyword id="KW-0391">Immunity</keyword>
<keyword id="KW-0472">Membrane</keyword>
<keyword id="KW-0490">MHC I</keyword>
<keyword id="KW-0597">Phosphoprotein</keyword>
<keyword id="KW-1185">Reference proteome</keyword>
<keyword id="KW-0732">Signal</keyword>
<keyword id="KW-0812">Transmembrane</keyword>
<keyword id="KW-1133">Transmembrane helix</keyword>
<protein>
    <recommendedName>
        <fullName>RLA class I histocompatibility antigen, alpha chain 19-1</fullName>
    </recommendedName>
</protein>
<evidence type="ECO:0000250" key="1"/>
<evidence type="ECO:0000250" key="2">
    <source>
        <dbReference type="UniProtKB" id="P01900"/>
    </source>
</evidence>
<evidence type="ECO:0000250" key="3">
    <source>
        <dbReference type="UniProtKB" id="P01901"/>
    </source>
</evidence>
<evidence type="ECO:0000255" key="4"/>
<evidence type="ECO:0000255" key="5">
    <source>
        <dbReference type="PROSITE-ProRule" id="PRU00114"/>
    </source>
</evidence>
<evidence type="ECO:0000256" key="6">
    <source>
        <dbReference type="SAM" id="MobiDB-lite"/>
    </source>
</evidence>
<evidence type="ECO:0000305" key="7"/>
<evidence type="ECO:0007829" key="8">
    <source>
        <dbReference type="PDB" id="6M24"/>
    </source>
</evidence>
<evidence type="ECO:0007829" key="9">
    <source>
        <dbReference type="PDB" id="6M2J"/>
    </source>
</evidence>
<evidence type="ECO:0007829" key="10">
    <source>
        <dbReference type="PDB" id="6M2K"/>
    </source>
</evidence>
<organism>
    <name type="scientific">Oryctolagus cuniculus</name>
    <name type="common">Rabbit</name>
    <dbReference type="NCBI Taxonomy" id="9986"/>
    <lineage>
        <taxon>Eukaryota</taxon>
        <taxon>Metazoa</taxon>
        <taxon>Chordata</taxon>
        <taxon>Craniata</taxon>
        <taxon>Vertebrata</taxon>
        <taxon>Euteleostomi</taxon>
        <taxon>Mammalia</taxon>
        <taxon>Eutheria</taxon>
        <taxon>Euarchontoglires</taxon>
        <taxon>Glires</taxon>
        <taxon>Lagomorpha</taxon>
        <taxon>Leporidae</taxon>
        <taxon>Oryctolagus</taxon>
    </lineage>
</organism>
<dbReference type="EMBL" id="K02819">
    <property type="protein sequence ID" value="AAA98730.1"/>
    <property type="molecule type" value="Genomic_DNA"/>
</dbReference>
<dbReference type="PIR" id="I46858">
    <property type="entry name" value="I46858"/>
</dbReference>
<dbReference type="PDB" id="6M24">
    <property type="method" value="X-ray"/>
    <property type="resolution" value="2.29 A"/>
    <property type="chains" value="A=25-298"/>
</dbReference>
<dbReference type="PDB" id="6M2J">
    <property type="method" value="X-ray"/>
    <property type="resolution" value="2.20 A"/>
    <property type="chains" value="A=25-298"/>
</dbReference>
<dbReference type="PDB" id="6M2K">
    <property type="method" value="X-ray"/>
    <property type="resolution" value="2.59 A"/>
    <property type="chains" value="A=25-298"/>
</dbReference>
<dbReference type="PDBsum" id="6M24"/>
<dbReference type="PDBsum" id="6M2J"/>
<dbReference type="PDBsum" id="6M2K"/>
<dbReference type="SMR" id="P06140"/>
<dbReference type="FunCoup" id="P06140">
    <property type="interactions" value="236"/>
</dbReference>
<dbReference type="STRING" id="9986.ENSOCUP00000031066"/>
<dbReference type="InParanoid" id="P06140"/>
<dbReference type="Proteomes" id="UP000001811">
    <property type="component" value="Unplaced"/>
</dbReference>
<dbReference type="GO" id="GO:0009897">
    <property type="term" value="C:external side of plasma membrane"/>
    <property type="evidence" value="ECO:0007669"/>
    <property type="project" value="TreeGrafter"/>
</dbReference>
<dbReference type="GO" id="GO:0005615">
    <property type="term" value="C:extracellular space"/>
    <property type="evidence" value="ECO:0007669"/>
    <property type="project" value="TreeGrafter"/>
</dbReference>
<dbReference type="GO" id="GO:0098553">
    <property type="term" value="C:lumenal side of endoplasmic reticulum membrane"/>
    <property type="evidence" value="ECO:0007669"/>
    <property type="project" value="UniProtKB-ARBA"/>
</dbReference>
<dbReference type="GO" id="GO:0042612">
    <property type="term" value="C:MHC class I protein complex"/>
    <property type="evidence" value="ECO:0007669"/>
    <property type="project" value="UniProtKB-KW"/>
</dbReference>
<dbReference type="GO" id="GO:0030670">
    <property type="term" value="C:phagocytic vesicle membrane"/>
    <property type="evidence" value="ECO:0007669"/>
    <property type="project" value="UniProtKB-ARBA"/>
</dbReference>
<dbReference type="GO" id="GO:0042605">
    <property type="term" value="F:peptide antigen binding"/>
    <property type="evidence" value="ECO:0007669"/>
    <property type="project" value="TreeGrafter"/>
</dbReference>
<dbReference type="GO" id="GO:0005102">
    <property type="term" value="F:signaling receptor binding"/>
    <property type="evidence" value="ECO:0007669"/>
    <property type="project" value="TreeGrafter"/>
</dbReference>
<dbReference type="GO" id="GO:0002486">
    <property type="term" value="P:antigen processing and presentation of endogenous peptide antigen via MHC class I via ER pathway, TAP-independent"/>
    <property type="evidence" value="ECO:0007669"/>
    <property type="project" value="TreeGrafter"/>
</dbReference>
<dbReference type="GO" id="GO:0002476">
    <property type="term" value="P:antigen processing and presentation of endogenous peptide antigen via MHC class Ib"/>
    <property type="evidence" value="ECO:0007669"/>
    <property type="project" value="TreeGrafter"/>
</dbReference>
<dbReference type="GO" id="GO:0006955">
    <property type="term" value="P:immune response"/>
    <property type="evidence" value="ECO:0007669"/>
    <property type="project" value="InterPro"/>
</dbReference>
<dbReference type="GO" id="GO:0001916">
    <property type="term" value="P:positive regulation of T cell mediated cytotoxicity"/>
    <property type="evidence" value="ECO:0007669"/>
    <property type="project" value="TreeGrafter"/>
</dbReference>
<dbReference type="CDD" id="cd07698">
    <property type="entry name" value="IgC1_MHC_I_alpha3"/>
    <property type="match status" value="1"/>
</dbReference>
<dbReference type="CDD" id="cd12087">
    <property type="entry name" value="TM_EGFR-like"/>
    <property type="match status" value="1"/>
</dbReference>
<dbReference type="FunFam" id="2.60.40.10:FF:000014">
    <property type="entry name" value="H-2 class I histocompatibility antigen, alpha chain"/>
    <property type="match status" value="1"/>
</dbReference>
<dbReference type="FunFam" id="3.30.500.10:FF:000001">
    <property type="entry name" value="H-2 class I histocompatibility antigen, alpha chain"/>
    <property type="match status" value="1"/>
</dbReference>
<dbReference type="Gene3D" id="2.60.40.10">
    <property type="entry name" value="Immunoglobulins"/>
    <property type="match status" value="1"/>
</dbReference>
<dbReference type="Gene3D" id="3.30.500.10">
    <property type="entry name" value="MHC class I-like antigen recognition-like"/>
    <property type="match status" value="1"/>
</dbReference>
<dbReference type="InterPro" id="IPR007110">
    <property type="entry name" value="Ig-like_dom"/>
</dbReference>
<dbReference type="InterPro" id="IPR036179">
    <property type="entry name" value="Ig-like_dom_sf"/>
</dbReference>
<dbReference type="InterPro" id="IPR013783">
    <property type="entry name" value="Ig-like_fold"/>
</dbReference>
<dbReference type="InterPro" id="IPR003006">
    <property type="entry name" value="Ig/MHC_CS"/>
</dbReference>
<dbReference type="InterPro" id="IPR003597">
    <property type="entry name" value="Ig_C1-set"/>
</dbReference>
<dbReference type="InterPro" id="IPR050208">
    <property type="entry name" value="MHC_class-I_related"/>
</dbReference>
<dbReference type="InterPro" id="IPR011161">
    <property type="entry name" value="MHC_I-like_Ag-recog"/>
</dbReference>
<dbReference type="InterPro" id="IPR037055">
    <property type="entry name" value="MHC_I-like_Ag-recog_sf"/>
</dbReference>
<dbReference type="InterPro" id="IPR011162">
    <property type="entry name" value="MHC_I/II-like_Ag-recog"/>
</dbReference>
<dbReference type="InterPro" id="IPR001039">
    <property type="entry name" value="MHC_I_a_a1/a2"/>
</dbReference>
<dbReference type="InterPro" id="IPR010579">
    <property type="entry name" value="MHC_I_a_C"/>
</dbReference>
<dbReference type="PANTHER" id="PTHR16675:SF251">
    <property type="entry name" value="HLA CLASS I HISTOCOMPATIBILITY ANTIGEN, C ALPHA CHAIN"/>
    <property type="match status" value="1"/>
</dbReference>
<dbReference type="PANTHER" id="PTHR16675">
    <property type="entry name" value="MHC CLASS I-RELATED"/>
    <property type="match status" value="1"/>
</dbReference>
<dbReference type="Pfam" id="PF07654">
    <property type="entry name" value="C1-set"/>
    <property type="match status" value="1"/>
</dbReference>
<dbReference type="Pfam" id="PF00129">
    <property type="entry name" value="MHC_I"/>
    <property type="match status" value="1"/>
</dbReference>
<dbReference type="Pfam" id="PF06623">
    <property type="entry name" value="MHC_I_C"/>
    <property type="match status" value="1"/>
</dbReference>
<dbReference type="PRINTS" id="PR01638">
    <property type="entry name" value="MHCCLASSI"/>
</dbReference>
<dbReference type="SMART" id="SM00407">
    <property type="entry name" value="IGc1"/>
    <property type="match status" value="1"/>
</dbReference>
<dbReference type="SUPFAM" id="SSF48726">
    <property type="entry name" value="Immunoglobulin"/>
    <property type="match status" value="1"/>
</dbReference>
<dbReference type="SUPFAM" id="SSF54452">
    <property type="entry name" value="MHC antigen-recognition domain"/>
    <property type="match status" value="1"/>
</dbReference>
<dbReference type="PROSITE" id="PS50835">
    <property type="entry name" value="IG_LIKE"/>
    <property type="match status" value="1"/>
</dbReference>
<dbReference type="PROSITE" id="PS00290">
    <property type="entry name" value="IG_MHC"/>
    <property type="match status" value="1"/>
</dbReference>
<feature type="signal peptide" evidence="4">
    <location>
        <begin position="1"/>
        <end position="24"/>
    </location>
</feature>
<feature type="chain" id="PRO_0000018942" description="RLA class I histocompatibility antigen, alpha chain 19-1">
    <location>
        <begin position="25"/>
        <end position="361"/>
    </location>
</feature>
<feature type="topological domain" description="Extracellular" evidence="4">
    <location>
        <begin position="25"/>
        <end position="308"/>
    </location>
</feature>
<feature type="transmembrane region" description="Helical" evidence="4">
    <location>
        <begin position="309"/>
        <end position="329"/>
    </location>
</feature>
<feature type="topological domain" description="Cytoplasmic" evidence="4">
    <location>
        <begin position="330"/>
        <end position="361"/>
    </location>
</feature>
<feature type="domain" description="Ig-like C1-type">
    <location>
        <begin position="209"/>
        <end position="297"/>
    </location>
</feature>
<feature type="region of interest" description="Alpha-1">
    <location>
        <begin position="25"/>
        <end position="114"/>
    </location>
</feature>
<feature type="region of interest" description="Alpha-2">
    <location>
        <begin position="115"/>
        <end position="206"/>
    </location>
</feature>
<feature type="region of interest" description="Alpha-3">
    <location>
        <begin position="207"/>
        <end position="298"/>
    </location>
</feature>
<feature type="region of interest" description="Connecting peptide">
    <location>
        <begin position="299"/>
        <end position="308"/>
    </location>
</feature>
<feature type="region of interest" description="Disordered" evidence="6">
    <location>
        <begin position="335"/>
        <end position="361"/>
    </location>
</feature>
<feature type="modified residue" description="Phosphoserine" evidence="2">
    <location>
        <position position="355"/>
    </location>
</feature>
<feature type="modified residue" description="Phosphoserine" evidence="3">
    <location>
        <position position="358"/>
    </location>
</feature>
<feature type="glycosylation site" description="N-linked (GlcNAc...) asparagine" evidence="1">
    <location>
        <position position="110"/>
    </location>
</feature>
<feature type="disulfide bond" evidence="5">
    <location>
        <begin position="125"/>
        <end position="188"/>
    </location>
</feature>
<feature type="disulfide bond" evidence="5">
    <location>
        <begin position="227"/>
        <end position="283"/>
    </location>
</feature>
<feature type="strand" evidence="9">
    <location>
        <begin position="27"/>
        <end position="36"/>
    </location>
</feature>
<feature type="strand" evidence="8">
    <location>
        <begin position="41"/>
        <end position="43"/>
    </location>
</feature>
<feature type="strand" evidence="9">
    <location>
        <begin position="45"/>
        <end position="52"/>
    </location>
</feature>
<feature type="strand" evidence="9">
    <location>
        <begin position="55"/>
        <end position="62"/>
    </location>
</feature>
<feature type="strand" evidence="9">
    <location>
        <begin position="64"/>
        <end position="66"/>
    </location>
</feature>
<feature type="strand" evidence="10">
    <location>
        <begin position="70"/>
        <end position="73"/>
    </location>
</feature>
<feature type="helix" evidence="9">
    <location>
        <begin position="74"/>
        <end position="78"/>
    </location>
</feature>
<feature type="helix" evidence="9">
    <location>
        <begin position="83"/>
        <end position="109"/>
    </location>
</feature>
<feature type="strand" evidence="9">
    <location>
        <begin position="113"/>
        <end position="115"/>
    </location>
</feature>
<feature type="strand" evidence="9">
    <location>
        <begin position="118"/>
        <end position="127"/>
    </location>
</feature>
<feature type="strand" evidence="9">
    <location>
        <begin position="133"/>
        <end position="142"/>
    </location>
</feature>
<feature type="strand" evidence="9">
    <location>
        <begin position="145"/>
        <end position="150"/>
    </location>
</feature>
<feature type="strand" evidence="9">
    <location>
        <begin position="157"/>
        <end position="161"/>
    </location>
</feature>
<feature type="helix" evidence="9">
    <location>
        <begin position="162"/>
        <end position="173"/>
    </location>
</feature>
<feature type="helix" evidence="9">
    <location>
        <begin position="176"/>
        <end position="185"/>
    </location>
</feature>
<feature type="helix" evidence="9">
    <location>
        <begin position="187"/>
        <end position="198"/>
    </location>
</feature>
<feature type="helix" evidence="9">
    <location>
        <begin position="200"/>
        <end position="203"/>
    </location>
</feature>
<feature type="strand" evidence="9">
    <location>
        <begin position="210"/>
        <end position="217"/>
    </location>
</feature>
<feature type="strand" evidence="9">
    <location>
        <begin position="219"/>
        <end position="235"/>
    </location>
</feature>
<feature type="strand" evidence="9">
    <location>
        <begin position="238"/>
        <end position="243"/>
    </location>
</feature>
<feature type="helix" evidence="9">
    <location>
        <begin position="249"/>
        <end position="251"/>
    </location>
</feature>
<feature type="strand" evidence="9">
    <location>
        <begin position="252"/>
        <end position="254"/>
    </location>
</feature>
<feature type="strand" evidence="9">
    <location>
        <begin position="261"/>
        <end position="263"/>
    </location>
</feature>
<feature type="strand" evidence="9">
    <location>
        <begin position="265"/>
        <end position="274"/>
    </location>
</feature>
<feature type="helix" evidence="9">
    <location>
        <begin position="278"/>
        <end position="280"/>
    </location>
</feature>
<feature type="strand" evidence="9">
    <location>
        <begin position="281"/>
        <end position="286"/>
    </location>
</feature>
<feature type="strand" evidence="9">
    <location>
        <begin position="294"/>
        <end position="296"/>
    </location>
</feature>
<sequence>MGSIPPRTLLLLLAGALTLKDTQAGSHSMRYFYTSVSRPGLGEPRFIIVGYVDDTQFVRFDSDAASPRMEQRAPWMGQVEPEYWDQQTQIAKDTAQTFRVNLNTALRYYNQSAAGSHTFQTMFGCEVWADGRFFHGYRQYAYDGADYIALNEDLRSWTAADTAAQNTQRKWEAAGEAERHRAYLERECVEWLRRYLEMGKETLQRADPPKAHVTHHPASDREATLRCWALGFYPAEISLTWQRDGEDQTQDTELVETRPGGDGTFQKWAAVVVPSGEEQRYTCRVQHEGLPEPLTLTWEPPAQPTALIVGIVAGVLGVLLILGAVVAVVRRKKHSSDGKGGRYTPAAGGHRDQGSDDSLMP</sequence>
<proteinExistence type="evidence at protein level"/>
<name>HA1B_RABIT</name>
<reference key="1">
    <citation type="journal article" date="1985" name="Immunogenetics">
        <title>Structure of a functional rabbit class I MHC gene: similarity to human class I genes.</title>
        <authorList>
            <person name="Marche P.N."/>
            <person name="Tykocinski M.L."/>
            <person name="Max E.E."/>
            <person name="Kindt T.J."/>
        </authorList>
    </citation>
    <scope>NUCLEOTIDE SEQUENCE [GENOMIC DNA]</scope>
</reference>